<feature type="chain" id="PRO_0000374732" description="Ribosomal protein uS12 methylthiotransferase RimO">
    <location>
        <begin position="1"/>
        <end position="453"/>
    </location>
</feature>
<feature type="domain" description="MTTase N-terminal" evidence="1">
    <location>
        <begin position="5"/>
        <end position="120"/>
    </location>
</feature>
<feature type="domain" description="Radical SAM core" evidence="2">
    <location>
        <begin position="137"/>
        <end position="382"/>
    </location>
</feature>
<feature type="domain" description="TRAM" evidence="1">
    <location>
        <begin position="385"/>
        <end position="453"/>
    </location>
</feature>
<feature type="binding site" evidence="1">
    <location>
        <position position="14"/>
    </location>
    <ligand>
        <name>[4Fe-4S] cluster</name>
        <dbReference type="ChEBI" id="CHEBI:49883"/>
        <label>1</label>
    </ligand>
</feature>
<feature type="binding site" evidence="1">
    <location>
        <position position="50"/>
    </location>
    <ligand>
        <name>[4Fe-4S] cluster</name>
        <dbReference type="ChEBI" id="CHEBI:49883"/>
        <label>1</label>
    </ligand>
</feature>
<feature type="binding site" evidence="1">
    <location>
        <position position="79"/>
    </location>
    <ligand>
        <name>[4Fe-4S] cluster</name>
        <dbReference type="ChEBI" id="CHEBI:49883"/>
        <label>1</label>
    </ligand>
</feature>
<feature type="binding site" evidence="1">
    <location>
        <position position="151"/>
    </location>
    <ligand>
        <name>[4Fe-4S] cluster</name>
        <dbReference type="ChEBI" id="CHEBI:49883"/>
        <label>2</label>
        <note>4Fe-4S-S-AdoMet</note>
    </ligand>
</feature>
<feature type="binding site" evidence="1">
    <location>
        <position position="155"/>
    </location>
    <ligand>
        <name>[4Fe-4S] cluster</name>
        <dbReference type="ChEBI" id="CHEBI:49883"/>
        <label>2</label>
        <note>4Fe-4S-S-AdoMet</note>
    </ligand>
</feature>
<feature type="binding site" evidence="1">
    <location>
        <position position="158"/>
    </location>
    <ligand>
        <name>[4Fe-4S] cluster</name>
        <dbReference type="ChEBI" id="CHEBI:49883"/>
        <label>2</label>
        <note>4Fe-4S-S-AdoMet</note>
    </ligand>
</feature>
<reference key="1">
    <citation type="submission" date="2008-02" db="EMBL/GenBank/DDBJ databases">
        <title>Complete sequence of chromosome 1 of Burkholderia cenocepacia MC0-3.</title>
        <authorList>
            <person name="Copeland A."/>
            <person name="Lucas S."/>
            <person name="Lapidus A."/>
            <person name="Barry K."/>
            <person name="Bruce D."/>
            <person name="Goodwin L."/>
            <person name="Glavina del Rio T."/>
            <person name="Dalin E."/>
            <person name="Tice H."/>
            <person name="Pitluck S."/>
            <person name="Chain P."/>
            <person name="Malfatti S."/>
            <person name="Shin M."/>
            <person name="Vergez L."/>
            <person name="Schmutz J."/>
            <person name="Larimer F."/>
            <person name="Land M."/>
            <person name="Hauser L."/>
            <person name="Kyrpides N."/>
            <person name="Mikhailova N."/>
            <person name="Tiedje J."/>
            <person name="Richardson P."/>
        </authorList>
    </citation>
    <scope>NUCLEOTIDE SEQUENCE [LARGE SCALE GENOMIC DNA]</scope>
    <source>
        <strain>MC0-3</strain>
    </source>
</reference>
<keyword id="KW-0004">4Fe-4S</keyword>
<keyword id="KW-0963">Cytoplasm</keyword>
<keyword id="KW-0408">Iron</keyword>
<keyword id="KW-0411">Iron-sulfur</keyword>
<keyword id="KW-0479">Metal-binding</keyword>
<keyword id="KW-0949">S-adenosyl-L-methionine</keyword>
<keyword id="KW-0808">Transferase</keyword>
<organism>
    <name type="scientific">Burkholderia orbicola (strain MC0-3)</name>
    <dbReference type="NCBI Taxonomy" id="406425"/>
    <lineage>
        <taxon>Bacteria</taxon>
        <taxon>Pseudomonadati</taxon>
        <taxon>Pseudomonadota</taxon>
        <taxon>Betaproteobacteria</taxon>
        <taxon>Burkholderiales</taxon>
        <taxon>Burkholderiaceae</taxon>
        <taxon>Burkholderia</taxon>
        <taxon>Burkholderia cepacia complex</taxon>
        <taxon>Burkholderia orbicola</taxon>
    </lineage>
</organism>
<name>RIMO_BURO0</name>
<comment type="function">
    <text evidence="1">Catalyzes the methylthiolation of an aspartic acid residue of ribosomal protein uS12.</text>
</comment>
<comment type="catalytic activity">
    <reaction evidence="1">
        <text>L-aspartate(89)-[ribosomal protein uS12]-hydrogen + (sulfur carrier)-SH + AH2 + 2 S-adenosyl-L-methionine = 3-methylsulfanyl-L-aspartate(89)-[ribosomal protein uS12]-hydrogen + (sulfur carrier)-H + 5'-deoxyadenosine + L-methionine + A + S-adenosyl-L-homocysteine + 2 H(+)</text>
        <dbReference type="Rhea" id="RHEA:37087"/>
        <dbReference type="Rhea" id="RHEA-COMP:10460"/>
        <dbReference type="Rhea" id="RHEA-COMP:10461"/>
        <dbReference type="Rhea" id="RHEA-COMP:14737"/>
        <dbReference type="Rhea" id="RHEA-COMP:14739"/>
        <dbReference type="ChEBI" id="CHEBI:13193"/>
        <dbReference type="ChEBI" id="CHEBI:15378"/>
        <dbReference type="ChEBI" id="CHEBI:17319"/>
        <dbReference type="ChEBI" id="CHEBI:17499"/>
        <dbReference type="ChEBI" id="CHEBI:29917"/>
        <dbReference type="ChEBI" id="CHEBI:29961"/>
        <dbReference type="ChEBI" id="CHEBI:57844"/>
        <dbReference type="ChEBI" id="CHEBI:57856"/>
        <dbReference type="ChEBI" id="CHEBI:59789"/>
        <dbReference type="ChEBI" id="CHEBI:64428"/>
        <dbReference type="ChEBI" id="CHEBI:73599"/>
        <dbReference type="EC" id="2.8.4.4"/>
    </reaction>
</comment>
<comment type="cofactor">
    <cofactor evidence="1">
        <name>[4Fe-4S] cluster</name>
        <dbReference type="ChEBI" id="CHEBI:49883"/>
    </cofactor>
    <text evidence="1">Binds 2 [4Fe-4S] clusters. One cluster is coordinated with 3 cysteines and an exchangeable S-adenosyl-L-methionine.</text>
</comment>
<comment type="subcellular location">
    <subcellularLocation>
        <location evidence="1">Cytoplasm</location>
    </subcellularLocation>
</comment>
<comment type="similarity">
    <text evidence="1">Belongs to the methylthiotransferase family. RimO subfamily.</text>
</comment>
<protein>
    <recommendedName>
        <fullName evidence="1">Ribosomal protein uS12 methylthiotransferase RimO</fullName>
        <shortName evidence="1">uS12 MTTase</shortName>
        <shortName evidence="1">uS12 methylthiotransferase</shortName>
        <ecNumber evidence="1">2.8.4.4</ecNumber>
    </recommendedName>
    <alternativeName>
        <fullName evidence="1">Ribosomal protein uS12 (aspartate-C(3))-methylthiotransferase</fullName>
    </alternativeName>
    <alternativeName>
        <fullName evidence="1">Ribosome maturation factor RimO</fullName>
    </alternativeName>
</protein>
<gene>
    <name evidence="1" type="primary">rimO</name>
    <name type="ordered locus">Bcenmc03_1807</name>
</gene>
<sequence length="453" mass="49464">MSQSPKVGFVSLGCPKALVDSEQIITQLRAEGYEISGSYDGADLVVVNTCGFIDEAVQESLDAIGEALTENGKVIVTGCLGAKSSASGSNLIEEVHPKVLAVTGPHAVGEVMQAVHSHLPKPHDPFVDLVPAAGIKLTPRHYAYLKISEGCNHRCTFCIIPSMRGDLVSRPVAEVMLEAENLFKSGVKELLVISQDTSAYGVDVKYRTGFWNGKPIKTRMTDLVAALGELAAQYGAWVRLHYVYPYPSVDEVIPLMAEGPFKGHVLPYLDVPFQHAHPEVLKRMKRPANAEKVLERVQKWREICPDLTIRSTFIAGFPGETEEQFETLLDFIREAELDRVGCFAYSPVEGATANDLDGALPDEVREERRARFMEVAEEVSANRMQRKIGKTLKVLIDEVSAEGGIGRTAADAPEIDGVVYVEPAAKASKRYKVGDFVSVKITGADGHDLWGEV</sequence>
<accession>B1JT65</accession>
<proteinExistence type="inferred from homology"/>
<dbReference type="EC" id="2.8.4.4" evidence="1"/>
<dbReference type="EMBL" id="CP000958">
    <property type="protein sequence ID" value="ACA90970.1"/>
    <property type="molecule type" value="Genomic_DNA"/>
</dbReference>
<dbReference type="RefSeq" id="WP_012328613.1">
    <property type="nucleotide sequence ID" value="NC_010508.1"/>
</dbReference>
<dbReference type="SMR" id="B1JT65"/>
<dbReference type="GeneID" id="83048582"/>
<dbReference type="KEGG" id="bcm:Bcenmc03_1807"/>
<dbReference type="HOGENOM" id="CLU_018697_0_0_4"/>
<dbReference type="Proteomes" id="UP000002169">
    <property type="component" value="Chromosome 1"/>
</dbReference>
<dbReference type="GO" id="GO:0005829">
    <property type="term" value="C:cytosol"/>
    <property type="evidence" value="ECO:0007669"/>
    <property type="project" value="TreeGrafter"/>
</dbReference>
<dbReference type="GO" id="GO:0051539">
    <property type="term" value="F:4 iron, 4 sulfur cluster binding"/>
    <property type="evidence" value="ECO:0007669"/>
    <property type="project" value="UniProtKB-UniRule"/>
</dbReference>
<dbReference type="GO" id="GO:0035599">
    <property type="term" value="F:aspartic acid methylthiotransferase activity"/>
    <property type="evidence" value="ECO:0007669"/>
    <property type="project" value="TreeGrafter"/>
</dbReference>
<dbReference type="GO" id="GO:0046872">
    <property type="term" value="F:metal ion binding"/>
    <property type="evidence" value="ECO:0007669"/>
    <property type="project" value="UniProtKB-KW"/>
</dbReference>
<dbReference type="GO" id="GO:0103039">
    <property type="term" value="F:protein methylthiotransferase activity"/>
    <property type="evidence" value="ECO:0007669"/>
    <property type="project" value="UniProtKB-EC"/>
</dbReference>
<dbReference type="GO" id="GO:0006400">
    <property type="term" value="P:tRNA modification"/>
    <property type="evidence" value="ECO:0007669"/>
    <property type="project" value="InterPro"/>
</dbReference>
<dbReference type="CDD" id="cd01335">
    <property type="entry name" value="Radical_SAM"/>
    <property type="match status" value="1"/>
</dbReference>
<dbReference type="FunFam" id="3.40.50.12160:FF:000002">
    <property type="entry name" value="Ribosomal protein S12 methylthiotransferase RimO"/>
    <property type="match status" value="1"/>
</dbReference>
<dbReference type="FunFam" id="3.80.30.20:FF:000001">
    <property type="entry name" value="tRNA-2-methylthio-N(6)-dimethylallyladenosine synthase 2"/>
    <property type="match status" value="1"/>
</dbReference>
<dbReference type="Gene3D" id="3.40.50.12160">
    <property type="entry name" value="Methylthiotransferase, N-terminal domain"/>
    <property type="match status" value="1"/>
</dbReference>
<dbReference type="Gene3D" id="2.40.50.140">
    <property type="entry name" value="Nucleic acid-binding proteins"/>
    <property type="match status" value="1"/>
</dbReference>
<dbReference type="Gene3D" id="3.80.30.20">
    <property type="entry name" value="tm_1862 like domain"/>
    <property type="match status" value="1"/>
</dbReference>
<dbReference type="HAMAP" id="MF_01865">
    <property type="entry name" value="MTTase_RimO"/>
    <property type="match status" value="1"/>
</dbReference>
<dbReference type="InterPro" id="IPR006638">
    <property type="entry name" value="Elp3/MiaA/NifB-like_rSAM"/>
</dbReference>
<dbReference type="InterPro" id="IPR005839">
    <property type="entry name" value="Methylthiotransferase"/>
</dbReference>
<dbReference type="InterPro" id="IPR020612">
    <property type="entry name" value="Methylthiotransferase_CS"/>
</dbReference>
<dbReference type="InterPro" id="IPR013848">
    <property type="entry name" value="Methylthiotransferase_N"/>
</dbReference>
<dbReference type="InterPro" id="IPR038135">
    <property type="entry name" value="Methylthiotransferase_N_sf"/>
</dbReference>
<dbReference type="InterPro" id="IPR012340">
    <property type="entry name" value="NA-bd_OB-fold"/>
</dbReference>
<dbReference type="InterPro" id="IPR005840">
    <property type="entry name" value="Ribosomal_uS12_MeSTrfase_RimO"/>
</dbReference>
<dbReference type="InterPro" id="IPR007197">
    <property type="entry name" value="rSAM"/>
</dbReference>
<dbReference type="InterPro" id="IPR023404">
    <property type="entry name" value="rSAM_horseshoe"/>
</dbReference>
<dbReference type="InterPro" id="IPR002792">
    <property type="entry name" value="TRAM_dom"/>
</dbReference>
<dbReference type="NCBIfam" id="TIGR01125">
    <property type="entry name" value="30S ribosomal protein S12 methylthiotransferase RimO"/>
    <property type="match status" value="1"/>
</dbReference>
<dbReference type="NCBIfam" id="TIGR00089">
    <property type="entry name" value="MiaB/RimO family radical SAM methylthiotransferase"/>
    <property type="match status" value="1"/>
</dbReference>
<dbReference type="PANTHER" id="PTHR43837">
    <property type="entry name" value="RIBOSOMAL PROTEIN S12 METHYLTHIOTRANSFERASE RIMO"/>
    <property type="match status" value="1"/>
</dbReference>
<dbReference type="PANTHER" id="PTHR43837:SF1">
    <property type="entry name" value="RIBOSOMAL PROTEIN US12 METHYLTHIOTRANSFERASE RIMO"/>
    <property type="match status" value="1"/>
</dbReference>
<dbReference type="Pfam" id="PF04055">
    <property type="entry name" value="Radical_SAM"/>
    <property type="match status" value="1"/>
</dbReference>
<dbReference type="Pfam" id="PF18693">
    <property type="entry name" value="TRAM_2"/>
    <property type="match status" value="1"/>
</dbReference>
<dbReference type="Pfam" id="PF00919">
    <property type="entry name" value="UPF0004"/>
    <property type="match status" value="1"/>
</dbReference>
<dbReference type="SFLD" id="SFLDG01082">
    <property type="entry name" value="B12-binding_domain_containing"/>
    <property type="match status" value="1"/>
</dbReference>
<dbReference type="SFLD" id="SFLDS00029">
    <property type="entry name" value="Radical_SAM"/>
    <property type="match status" value="1"/>
</dbReference>
<dbReference type="SFLD" id="SFLDF00274">
    <property type="entry name" value="ribosomal_protein_S12_methylth"/>
    <property type="match status" value="1"/>
</dbReference>
<dbReference type="SMART" id="SM00729">
    <property type="entry name" value="Elp3"/>
    <property type="match status" value="1"/>
</dbReference>
<dbReference type="SUPFAM" id="SSF102114">
    <property type="entry name" value="Radical SAM enzymes"/>
    <property type="match status" value="1"/>
</dbReference>
<dbReference type="PROSITE" id="PS51449">
    <property type="entry name" value="MTTASE_N"/>
    <property type="match status" value="1"/>
</dbReference>
<dbReference type="PROSITE" id="PS01278">
    <property type="entry name" value="MTTASE_RADICAL"/>
    <property type="match status" value="1"/>
</dbReference>
<dbReference type="PROSITE" id="PS51918">
    <property type="entry name" value="RADICAL_SAM"/>
    <property type="match status" value="1"/>
</dbReference>
<dbReference type="PROSITE" id="PS50926">
    <property type="entry name" value="TRAM"/>
    <property type="match status" value="1"/>
</dbReference>
<evidence type="ECO:0000255" key="1">
    <source>
        <dbReference type="HAMAP-Rule" id="MF_01865"/>
    </source>
</evidence>
<evidence type="ECO:0000255" key="2">
    <source>
        <dbReference type="PROSITE-ProRule" id="PRU01266"/>
    </source>
</evidence>